<proteinExistence type="inferred from homology"/>
<dbReference type="EMBL" id="CP000266">
    <property type="protein sequence ID" value="ABF02306.1"/>
    <property type="molecule type" value="Genomic_DNA"/>
</dbReference>
<dbReference type="RefSeq" id="WP_001274023.1">
    <property type="nucleotide sequence ID" value="NC_008258.1"/>
</dbReference>
<dbReference type="SMR" id="Q0T8H0"/>
<dbReference type="KEGG" id="sfv:SFV_0018"/>
<dbReference type="HOGENOM" id="CLU_160655_4_0_6"/>
<dbReference type="Proteomes" id="UP000000659">
    <property type="component" value="Chromosome"/>
</dbReference>
<dbReference type="GO" id="GO:0005829">
    <property type="term" value="C:cytosol"/>
    <property type="evidence" value="ECO:0007669"/>
    <property type="project" value="TreeGrafter"/>
</dbReference>
<dbReference type="GO" id="GO:0015935">
    <property type="term" value="C:small ribosomal subunit"/>
    <property type="evidence" value="ECO:0007669"/>
    <property type="project" value="TreeGrafter"/>
</dbReference>
<dbReference type="GO" id="GO:0070181">
    <property type="term" value="F:small ribosomal subunit rRNA binding"/>
    <property type="evidence" value="ECO:0007669"/>
    <property type="project" value="TreeGrafter"/>
</dbReference>
<dbReference type="GO" id="GO:0003735">
    <property type="term" value="F:structural constituent of ribosome"/>
    <property type="evidence" value="ECO:0007669"/>
    <property type="project" value="InterPro"/>
</dbReference>
<dbReference type="GO" id="GO:0006412">
    <property type="term" value="P:translation"/>
    <property type="evidence" value="ECO:0007669"/>
    <property type="project" value="UniProtKB-UniRule"/>
</dbReference>
<dbReference type="FunFam" id="1.20.58.110:FF:000001">
    <property type="entry name" value="30S ribosomal protein S20"/>
    <property type="match status" value="1"/>
</dbReference>
<dbReference type="Gene3D" id="1.20.58.110">
    <property type="entry name" value="Ribosomal protein S20"/>
    <property type="match status" value="1"/>
</dbReference>
<dbReference type="HAMAP" id="MF_00500">
    <property type="entry name" value="Ribosomal_bS20"/>
    <property type="match status" value="1"/>
</dbReference>
<dbReference type="InterPro" id="IPR002583">
    <property type="entry name" value="Ribosomal_bS20"/>
</dbReference>
<dbReference type="InterPro" id="IPR036510">
    <property type="entry name" value="Ribosomal_bS20_sf"/>
</dbReference>
<dbReference type="NCBIfam" id="TIGR00029">
    <property type="entry name" value="S20"/>
    <property type="match status" value="1"/>
</dbReference>
<dbReference type="PANTHER" id="PTHR33398">
    <property type="entry name" value="30S RIBOSOMAL PROTEIN S20"/>
    <property type="match status" value="1"/>
</dbReference>
<dbReference type="PANTHER" id="PTHR33398:SF1">
    <property type="entry name" value="SMALL RIBOSOMAL SUBUNIT PROTEIN BS20C"/>
    <property type="match status" value="1"/>
</dbReference>
<dbReference type="Pfam" id="PF01649">
    <property type="entry name" value="Ribosomal_S20p"/>
    <property type="match status" value="1"/>
</dbReference>
<dbReference type="SUPFAM" id="SSF46992">
    <property type="entry name" value="Ribosomal protein S20"/>
    <property type="match status" value="1"/>
</dbReference>
<feature type="chain" id="PRO_1000014658" description="Small ribosomal subunit protein bS20">
    <location>
        <begin position="1"/>
        <end position="87"/>
    </location>
</feature>
<evidence type="ECO:0000255" key="1">
    <source>
        <dbReference type="HAMAP-Rule" id="MF_00500"/>
    </source>
</evidence>
<evidence type="ECO:0000305" key="2"/>
<protein>
    <recommendedName>
        <fullName evidence="1">Small ribosomal subunit protein bS20</fullName>
    </recommendedName>
    <alternativeName>
        <fullName evidence="2">30S ribosomal protein S20</fullName>
    </alternativeName>
</protein>
<reference key="1">
    <citation type="journal article" date="2006" name="BMC Genomics">
        <title>Complete genome sequence of Shigella flexneri 5b and comparison with Shigella flexneri 2a.</title>
        <authorList>
            <person name="Nie H."/>
            <person name="Yang F."/>
            <person name="Zhang X."/>
            <person name="Yang J."/>
            <person name="Chen L."/>
            <person name="Wang J."/>
            <person name="Xiong Z."/>
            <person name="Peng J."/>
            <person name="Sun L."/>
            <person name="Dong J."/>
            <person name="Xue Y."/>
            <person name="Xu X."/>
            <person name="Chen S."/>
            <person name="Yao Z."/>
            <person name="Shen Y."/>
            <person name="Jin Q."/>
        </authorList>
    </citation>
    <scope>NUCLEOTIDE SEQUENCE [LARGE SCALE GENOMIC DNA]</scope>
    <source>
        <strain>8401</strain>
    </source>
</reference>
<keyword id="KW-0687">Ribonucleoprotein</keyword>
<keyword id="KW-0689">Ribosomal protein</keyword>
<keyword id="KW-0694">RNA-binding</keyword>
<keyword id="KW-0699">rRNA-binding</keyword>
<gene>
    <name evidence="1" type="primary">rpsT</name>
    <name type="ordered locus">SFV_0018</name>
</gene>
<comment type="function">
    <text evidence="1">Binds directly to 16S ribosomal RNA.</text>
</comment>
<comment type="similarity">
    <text evidence="1">Belongs to the bacterial ribosomal protein bS20 family.</text>
</comment>
<organism>
    <name type="scientific">Shigella flexneri serotype 5b (strain 8401)</name>
    <dbReference type="NCBI Taxonomy" id="373384"/>
    <lineage>
        <taxon>Bacteria</taxon>
        <taxon>Pseudomonadati</taxon>
        <taxon>Pseudomonadota</taxon>
        <taxon>Gammaproteobacteria</taxon>
        <taxon>Enterobacterales</taxon>
        <taxon>Enterobacteriaceae</taxon>
        <taxon>Shigella</taxon>
    </lineage>
</organism>
<accession>Q0T8H0</accession>
<name>RS20_SHIF8</name>
<sequence>MANIKSAKKRAIQSEKARKIIASRRSMMRTFIKKVYAAIEAGDKAAAQKAFNEMQPIVDRQAAKGLIHKNKAARHKANLTAQINKLA</sequence>